<proteinExistence type="predicted"/>
<protein>
    <recommendedName>
        <fullName>Uncharacterized protein ORF28</fullName>
    </recommendedName>
</protein>
<feature type="chain" id="PRO_0000385059" description="Uncharacterized protein ORF28">
    <location>
        <begin position="1"/>
        <end position="853"/>
    </location>
</feature>
<feature type="coiled-coil region" evidence="1">
    <location>
        <begin position="313"/>
        <end position="343"/>
    </location>
</feature>
<feature type="coiled-coil region" evidence="1">
    <location>
        <begin position="480"/>
        <end position="528"/>
    </location>
</feature>
<evidence type="ECO:0000255" key="1"/>
<dbReference type="EMBL" id="AY509253">
    <property type="protein sequence ID" value="AAS00920.1"/>
    <property type="molecule type" value="Genomic_DNA"/>
</dbReference>
<dbReference type="RefSeq" id="YP_024573.1">
    <property type="nucleotide sequence ID" value="NC_005881.2"/>
</dbReference>
<dbReference type="SMR" id="Q6R7J5"/>
<dbReference type="KEGG" id="vg:2948180"/>
<dbReference type="Proteomes" id="UP000007021">
    <property type="component" value="Segment"/>
</dbReference>
<organism>
    <name type="scientific">Ostreid herpesvirus 1 (isolate France)</name>
    <name type="common">OsHV-1</name>
    <name type="synonym">Pacific oyster herpesvirus</name>
    <dbReference type="NCBI Taxonomy" id="654903"/>
    <lineage>
        <taxon>Viruses</taxon>
        <taxon>Duplodnaviria</taxon>
        <taxon>Heunggongvirae</taxon>
        <taxon>Peploviricota</taxon>
        <taxon>Herviviricetes</taxon>
        <taxon>Herpesvirales</taxon>
        <taxon>Malacoherpesviridae</taxon>
        <taxon>Ostreavirus</taxon>
        <taxon>Ostreavirus ostreidmalaco1</taxon>
        <taxon>Ostreid herpesvirus 1</taxon>
    </lineage>
</organism>
<sequence length="853" mass="98079">MAEIETRGPEVFSRMPKGGIGAEKLQRLLRRKHGCTGKVPIYLIHPTVNSLLSLDLISHPAKWSPNAQGLDLHLTSMKKHFTAYCLADVLEILKPLTKDFQSSKFNVMEVLYFEEKEDLTKFIEMTFVEEINKAKANVGFDDRIDIIGNMFITAIKYHLALGFTPTIPTEDFYVEMSWKPDPSFNQIEKVMDYYCWMFERAFDRLGLMTMDEIVHDLMITDKNGVRSVSTITTKRDVVPLDFTKTFNFLGTLFIGNVSQLALIIPDEIKLIFAEKESKNLLLERLSKNIVVVSTELTKEASNAITNIMRNDVRTDEDFKEAAKKREESEKRMNKMLENRLKVALNDTSENSDPFDVDKFGKNMLKNVEAELKMSTNIQNLLASNNVTATKTAIDLDDVHNLAIKSTEYVDTMTGHMPSGSYIPGSKKGIQNEKERKQIQKTLQGQKLNENLDIVVKMLKSKITENELATNKITEMMITHEGQVKMIDELKRNIKLLIEKMTLIEKEVKKEKKENEKLLKDMKISSELIANVSQQLHLSEEDRKRLIDLSASMKDCGEDPLPIQQKLDKATTSLVQLFGSYNTKNGDTIAKRNAELKRTRMAYDQVLSAECVRPISTFIGVRTMQEMQRSNVWMIEKWMGDREVNDAIYAKEKTMVTGEEINYTSGETDENIIQENAEISFIDLNPITKERARTMKTFFNRTEVTEPDKIFDRHYMTIQFKLKGDIDLVMGKPLSQKWDMFYNTNFRLKRDIYTKVGNKLQPKLTEESLILYGKEFFRIMGGEIEGMDRSKIERVMNIVTSIEDVVDVSKMGVSETMIMEMFKIPIFMTVNKLYSALRRRTGIDDIASSNILKK</sequence>
<gene>
    <name type="ORF">ORF28</name>
</gene>
<organismHost>
    <name type="scientific">Magallana gigas</name>
    <name type="common">Pacific oyster</name>
    <name type="synonym">Crassostrea gigas</name>
    <dbReference type="NCBI Taxonomy" id="29159"/>
</organismHost>
<organismHost>
    <name type="scientific">Pecten maximus</name>
    <name type="common">King scallop</name>
    <name type="synonym">Pilgrim's clam</name>
    <dbReference type="NCBI Taxonomy" id="6579"/>
</organismHost>
<name>Y028_OSHVF</name>
<keyword id="KW-0175">Coiled coil</keyword>
<keyword id="KW-1185">Reference proteome</keyword>
<accession>Q6R7J5</accession>
<reference key="1">
    <citation type="journal article" date="2005" name="J. Gen. Virol.">
        <title>A novel class of herpesvirus with bivalve hosts.</title>
        <authorList>
            <person name="Davison A.J."/>
            <person name="Trus B.L."/>
            <person name="Cheng N."/>
            <person name="Steven A.C."/>
            <person name="Watson M.S."/>
            <person name="Cunningham C."/>
            <person name="Le Deuff R.M."/>
            <person name="Renault T."/>
        </authorList>
    </citation>
    <scope>NUCLEOTIDE SEQUENCE [LARGE SCALE GENOMIC DNA]</scope>
</reference>